<gene>
    <name evidence="1" type="primary">murG</name>
    <name type="ordered locus">OB1093</name>
</gene>
<comment type="function">
    <text evidence="1">Cell wall formation. Catalyzes the transfer of a GlcNAc subunit on undecaprenyl-pyrophosphoryl-MurNAc-pentapeptide (lipid intermediate I) to form undecaprenyl-pyrophosphoryl-MurNAc-(pentapeptide)GlcNAc (lipid intermediate II).</text>
</comment>
<comment type="catalytic activity">
    <reaction evidence="1">
        <text>di-trans,octa-cis-undecaprenyl diphospho-N-acetyl-alpha-D-muramoyl-L-alanyl-D-glutamyl-meso-2,6-diaminopimeloyl-D-alanyl-D-alanine + UDP-N-acetyl-alpha-D-glucosamine = di-trans,octa-cis-undecaprenyl diphospho-[N-acetyl-alpha-D-glucosaminyl-(1-&gt;4)]-N-acetyl-alpha-D-muramoyl-L-alanyl-D-glutamyl-meso-2,6-diaminopimeloyl-D-alanyl-D-alanine + UDP + H(+)</text>
        <dbReference type="Rhea" id="RHEA:31227"/>
        <dbReference type="ChEBI" id="CHEBI:15378"/>
        <dbReference type="ChEBI" id="CHEBI:57705"/>
        <dbReference type="ChEBI" id="CHEBI:58223"/>
        <dbReference type="ChEBI" id="CHEBI:61387"/>
        <dbReference type="ChEBI" id="CHEBI:61388"/>
        <dbReference type="EC" id="2.4.1.227"/>
    </reaction>
</comment>
<comment type="pathway">
    <text evidence="1">Cell wall biogenesis; peptidoglycan biosynthesis.</text>
</comment>
<comment type="subcellular location">
    <subcellularLocation>
        <location evidence="1">Cell membrane</location>
        <topology evidence="1">Peripheral membrane protein</topology>
        <orientation evidence="1">Cytoplasmic side</orientation>
    </subcellularLocation>
</comment>
<comment type="similarity">
    <text evidence="1">Belongs to the glycosyltransferase 28 family. MurG subfamily.</text>
</comment>
<sequence length="357" mass="39816">MKNNKRILFTGGGTAGHVIVNLALIPYYQERGWEIDYIGSYNGIERDLISPLDGVTYHSVSTGKLRRYMSKENLKDPFKVLKGTMQAYRIIGKRKPSIVFSKGGFVSVPVVAAAKLRGVPSIIHESDYTPGLANKLSIPFTKRVLATFPETMKYLPENKASYVGAVIRDELFTGKRDIGLKISGLKGNKPVLLVMGGSGGSEKINQTIRQSLTKLLDEFEIIHICGKGKVDDSIQLDGYVQFEYINHELKDIFAATDLVISRAGSNAIFEFLALRLPMLLIPLSKEASRGDQIINANSFKKKNYARVLQEEELTEQSLESHLLELSKAAPIIRDEMKKYKSEQSLQSVTEIIDNVMK</sequence>
<protein>
    <recommendedName>
        <fullName evidence="1">UDP-N-acetylglucosamine--N-acetylmuramyl-(pentapeptide) pyrophosphoryl-undecaprenol N-acetylglucosamine transferase</fullName>
        <ecNumber evidence="1">2.4.1.227</ecNumber>
    </recommendedName>
    <alternativeName>
        <fullName evidence="1">Undecaprenyl-PP-MurNAc-pentapeptide-UDPGlcNAc GlcNAc transferase</fullName>
    </alternativeName>
</protein>
<proteinExistence type="inferred from homology"/>
<reference key="1">
    <citation type="journal article" date="2002" name="Nucleic Acids Res.">
        <title>Genome sequence of Oceanobacillus iheyensis isolated from the Iheya Ridge and its unexpected adaptive capabilities to extreme environments.</title>
        <authorList>
            <person name="Takami H."/>
            <person name="Takaki Y."/>
            <person name="Uchiyama I."/>
        </authorList>
    </citation>
    <scope>NUCLEOTIDE SEQUENCE [LARGE SCALE GENOMIC DNA]</scope>
    <source>
        <strain>DSM 14371 / CIP 107618 / JCM 11309 / KCTC 3954 / HTE831</strain>
    </source>
</reference>
<accession>Q8CUL4</accession>
<feature type="chain" id="PRO_0000109193" description="UDP-N-acetylglucosamine--N-acetylmuramyl-(pentapeptide) pyrophosphoryl-undecaprenol N-acetylglucosamine transferase">
    <location>
        <begin position="1"/>
        <end position="357"/>
    </location>
</feature>
<feature type="binding site" evidence="1">
    <location>
        <begin position="14"/>
        <end position="16"/>
    </location>
    <ligand>
        <name>UDP-N-acetyl-alpha-D-glucosamine</name>
        <dbReference type="ChEBI" id="CHEBI:57705"/>
    </ligand>
</feature>
<feature type="binding site" evidence="1">
    <location>
        <position position="168"/>
    </location>
    <ligand>
        <name>UDP-N-acetyl-alpha-D-glucosamine</name>
        <dbReference type="ChEBI" id="CHEBI:57705"/>
    </ligand>
</feature>
<feature type="binding site" evidence="1">
    <location>
        <position position="198"/>
    </location>
    <ligand>
        <name>UDP-N-acetyl-alpha-D-glucosamine</name>
        <dbReference type="ChEBI" id="CHEBI:57705"/>
    </ligand>
</feature>
<feature type="binding site" evidence="1">
    <location>
        <position position="292"/>
    </location>
    <ligand>
        <name>UDP-N-acetyl-alpha-D-glucosamine</name>
        <dbReference type="ChEBI" id="CHEBI:57705"/>
    </ligand>
</feature>
<name>MURG_OCEIH</name>
<keyword id="KW-0131">Cell cycle</keyword>
<keyword id="KW-0132">Cell division</keyword>
<keyword id="KW-1003">Cell membrane</keyword>
<keyword id="KW-0133">Cell shape</keyword>
<keyword id="KW-0961">Cell wall biogenesis/degradation</keyword>
<keyword id="KW-0328">Glycosyltransferase</keyword>
<keyword id="KW-0472">Membrane</keyword>
<keyword id="KW-0573">Peptidoglycan synthesis</keyword>
<keyword id="KW-1185">Reference proteome</keyword>
<keyword id="KW-0808">Transferase</keyword>
<evidence type="ECO:0000255" key="1">
    <source>
        <dbReference type="HAMAP-Rule" id="MF_00033"/>
    </source>
</evidence>
<dbReference type="EC" id="2.4.1.227" evidence="1"/>
<dbReference type="EMBL" id="BA000028">
    <property type="protein sequence ID" value="BAC13049.1"/>
    <property type="molecule type" value="Genomic_DNA"/>
</dbReference>
<dbReference type="RefSeq" id="WP_011065494.1">
    <property type="nucleotide sequence ID" value="NC_004193.1"/>
</dbReference>
<dbReference type="SMR" id="Q8CUL4"/>
<dbReference type="STRING" id="221109.gene:10733332"/>
<dbReference type="CAZy" id="GT28">
    <property type="family name" value="Glycosyltransferase Family 28"/>
</dbReference>
<dbReference type="KEGG" id="oih:OB1093"/>
<dbReference type="eggNOG" id="COG0707">
    <property type="taxonomic scope" value="Bacteria"/>
</dbReference>
<dbReference type="HOGENOM" id="CLU_037404_0_0_9"/>
<dbReference type="OrthoDB" id="9808936at2"/>
<dbReference type="PhylomeDB" id="Q8CUL4"/>
<dbReference type="UniPathway" id="UPA00219"/>
<dbReference type="Proteomes" id="UP000000822">
    <property type="component" value="Chromosome"/>
</dbReference>
<dbReference type="GO" id="GO:0005886">
    <property type="term" value="C:plasma membrane"/>
    <property type="evidence" value="ECO:0007669"/>
    <property type="project" value="UniProtKB-SubCell"/>
</dbReference>
<dbReference type="GO" id="GO:0051991">
    <property type="term" value="F:UDP-N-acetyl-D-glucosamine:N-acetylmuramoyl-L-alanyl-D-glutamyl-meso-2,6-diaminopimelyl-D-alanyl-D-alanine-diphosphoundecaprenol 4-beta-N-acetylglucosaminlytransferase activity"/>
    <property type="evidence" value="ECO:0007669"/>
    <property type="project" value="RHEA"/>
</dbReference>
<dbReference type="GO" id="GO:0050511">
    <property type="term" value="F:undecaprenyldiphospho-muramoylpentapeptide beta-N-acetylglucosaminyltransferase activity"/>
    <property type="evidence" value="ECO:0007669"/>
    <property type="project" value="UniProtKB-UniRule"/>
</dbReference>
<dbReference type="GO" id="GO:0005975">
    <property type="term" value="P:carbohydrate metabolic process"/>
    <property type="evidence" value="ECO:0007669"/>
    <property type="project" value="InterPro"/>
</dbReference>
<dbReference type="GO" id="GO:0051301">
    <property type="term" value="P:cell division"/>
    <property type="evidence" value="ECO:0007669"/>
    <property type="project" value="UniProtKB-KW"/>
</dbReference>
<dbReference type="GO" id="GO:0071555">
    <property type="term" value="P:cell wall organization"/>
    <property type="evidence" value="ECO:0007669"/>
    <property type="project" value="UniProtKB-KW"/>
</dbReference>
<dbReference type="GO" id="GO:0030259">
    <property type="term" value="P:lipid glycosylation"/>
    <property type="evidence" value="ECO:0007669"/>
    <property type="project" value="UniProtKB-UniRule"/>
</dbReference>
<dbReference type="GO" id="GO:0009252">
    <property type="term" value="P:peptidoglycan biosynthetic process"/>
    <property type="evidence" value="ECO:0007669"/>
    <property type="project" value="UniProtKB-UniRule"/>
</dbReference>
<dbReference type="GO" id="GO:0008360">
    <property type="term" value="P:regulation of cell shape"/>
    <property type="evidence" value="ECO:0007669"/>
    <property type="project" value="UniProtKB-KW"/>
</dbReference>
<dbReference type="CDD" id="cd03785">
    <property type="entry name" value="GT28_MurG"/>
    <property type="match status" value="1"/>
</dbReference>
<dbReference type="Gene3D" id="3.40.50.2000">
    <property type="entry name" value="Glycogen Phosphorylase B"/>
    <property type="match status" value="2"/>
</dbReference>
<dbReference type="HAMAP" id="MF_00033">
    <property type="entry name" value="MurG"/>
    <property type="match status" value="1"/>
</dbReference>
<dbReference type="InterPro" id="IPR006009">
    <property type="entry name" value="GlcNAc_MurG"/>
</dbReference>
<dbReference type="InterPro" id="IPR007235">
    <property type="entry name" value="Glyco_trans_28_C"/>
</dbReference>
<dbReference type="InterPro" id="IPR004276">
    <property type="entry name" value="GlycoTrans_28_N"/>
</dbReference>
<dbReference type="NCBIfam" id="NF009102">
    <property type="entry name" value="PRK12446.1"/>
    <property type="match status" value="1"/>
</dbReference>
<dbReference type="PANTHER" id="PTHR21015:SF27">
    <property type="entry name" value="UDP-N-ACETYLGLUCOSAMINE--N-ACETYLMURAMYL-(PENTAPEPTIDE) PYROPHOSPHORYL-UNDECAPRENOL N-ACETYLGLUCOSAMINE TRANSFERASE"/>
    <property type="match status" value="1"/>
</dbReference>
<dbReference type="PANTHER" id="PTHR21015">
    <property type="entry name" value="UDP-N-ACETYLGLUCOSAMINE--N-ACETYLMURAMYL-(PENTAPEPTIDE) PYROPHOSPHORYL-UNDECAPRENOL N-ACETYLGLUCOSAMINE TRANSFERASE 1"/>
    <property type="match status" value="1"/>
</dbReference>
<dbReference type="Pfam" id="PF04101">
    <property type="entry name" value="Glyco_tran_28_C"/>
    <property type="match status" value="1"/>
</dbReference>
<dbReference type="Pfam" id="PF03033">
    <property type="entry name" value="Glyco_transf_28"/>
    <property type="match status" value="1"/>
</dbReference>
<dbReference type="SUPFAM" id="SSF53756">
    <property type="entry name" value="UDP-Glycosyltransferase/glycogen phosphorylase"/>
    <property type="match status" value="1"/>
</dbReference>
<organism>
    <name type="scientific">Oceanobacillus iheyensis (strain DSM 14371 / CIP 107618 / JCM 11309 / KCTC 3954 / HTE831)</name>
    <dbReference type="NCBI Taxonomy" id="221109"/>
    <lineage>
        <taxon>Bacteria</taxon>
        <taxon>Bacillati</taxon>
        <taxon>Bacillota</taxon>
        <taxon>Bacilli</taxon>
        <taxon>Bacillales</taxon>
        <taxon>Bacillaceae</taxon>
        <taxon>Oceanobacillus</taxon>
    </lineage>
</organism>